<gene>
    <name evidence="1" type="primary">prmC</name>
    <name type="ordered locus">FN1331</name>
</gene>
<organism>
    <name type="scientific">Fusobacterium nucleatum subsp. nucleatum (strain ATCC 25586 / DSM 15643 / BCRC 10681 / CIP 101130 / JCM 8532 / KCTC 2640 / LMG 13131 / VPI 4355)</name>
    <dbReference type="NCBI Taxonomy" id="190304"/>
    <lineage>
        <taxon>Bacteria</taxon>
        <taxon>Fusobacteriati</taxon>
        <taxon>Fusobacteriota</taxon>
        <taxon>Fusobacteriia</taxon>
        <taxon>Fusobacteriales</taxon>
        <taxon>Fusobacteriaceae</taxon>
        <taxon>Fusobacterium</taxon>
    </lineage>
</organism>
<reference key="1">
    <citation type="journal article" date="2002" name="J. Bacteriol.">
        <title>Genome sequence and analysis of the oral bacterium Fusobacterium nucleatum strain ATCC 25586.</title>
        <authorList>
            <person name="Kapatral V."/>
            <person name="Anderson I."/>
            <person name="Ivanova N."/>
            <person name="Reznik G."/>
            <person name="Los T."/>
            <person name="Lykidis A."/>
            <person name="Bhattacharyya A."/>
            <person name="Bartman A."/>
            <person name="Gardner W."/>
            <person name="Grechkin G."/>
            <person name="Zhu L."/>
            <person name="Vasieva O."/>
            <person name="Chu L."/>
            <person name="Kogan Y."/>
            <person name="Chaga O."/>
            <person name="Goltsman E."/>
            <person name="Bernal A."/>
            <person name="Larsen N."/>
            <person name="D'Souza M."/>
            <person name="Walunas T."/>
            <person name="Pusch G."/>
            <person name="Haselkorn R."/>
            <person name="Fonstein M."/>
            <person name="Kyrpides N.C."/>
            <person name="Overbeek R."/>
        </authorList>
    </citation>
    <scope>NUCLEOTIDE SEQUENCE [LARGE SCALE GENOMIC DNA]</scope>
    <source>
        <strain>ATCC 25586 / DSM 15643 / BCRC 10681 / CIP 101130 / JCM 8532 / KCTC 2640 / LMG 13131 / VPI 4355</strain>
    </source>
</reference>
<protein>
    <recommendedName>
        <fullName evidence="1">Release factor glutamine methyltransferase</fullName>
        <shortName evidence="1">RF MTase</shortName>
        <ecNumber evidence="1">2.1.1.297</ecNumber>
    </recommendedName>
    <alternativeName>
        <fullName evidence="1">N5-glutamine methyltransferase PrmC</fullName>
    </alternativeName>
    <alternativeName>
        <fullName evidence="1">Protein-(glutamine-N5) MTase PrmC</fullName>
    </alternativeName>
    <alternativeName>
        <fullName evidence="1">Protein-glutamine N-methyltransferase PrmC</fullName>
    </alternativeName>
</protein>
<feature type="chain" id="PRO_0000414523" description="Release factor glutamine methyltransferase">
    <location>
        <begin position="1"/>
        <end position="354"/>
    </location>
</feature>
<feature type="binding site" evidence="1">
    <location>
        <begin position="174"/>
        <end position="178"/>
    </location>
    <ligand>
        <name>S-adenosyl-L-methionine</name>
        <dbReference type="ChEBI" id="CHEBI:59789"/>
    </ligand>
</feature>
<feature type="binding site" evidence="1">
    <location>
        <position position="197"/>
    </location>
    <ligand>
        <name>S-adenosyl-L-methionine</name>
        <dbReference type="ChEBI" id="CHEBI:59789"/>
    </ligand>
</feature>
<feature type="binding site" evidence="1">
    <location>
        <begin position="241"/>
        <end position="244"/>
    </location>
    <ligand>
        <name>substrate</name>
    </ligand>
</feature>
<feature type="binding site" evidence="1">
    <location>
        <position position="241"/>
    </location>
    <ligand>
        <name>S-adenosyl-L-methionine</name>
        <dbReference type="ChEBI" id="CHEBI:59789"/>
    </ligand>
</feature>
<evidence type="ECO:0000255" key="1">
    <source>
        <dbReference type="HAMAP-Rule" id="MF_02126"/>
    </source>
</evidence>
<sequence>MSYVLNLDRIALYIHYERELSEDEKTSIKQYLKKMVEENKTFDELKGEKKDFKEENLDIFNKSVEYLKKNGVPNPLLDTEYIFSDVLKVNKNTLKYSMSREIKEEDKNKIREMLVLRAKKRKPLQYILGEWEFYGLPFKMSEGVLIPRADTEILVEQCIQLMREVEEPNILDIGSGSGAISIAVANELKSSSVTGIDINEKAIKLAIENKILNKIENVNFIESNLFGKLDKDFKYDLIVSNPPYISKDEYETLMPEVKNYEPQNALTDLGDGLHFYKEISKLAGEYLKDTGYLAFEIGYNQAKDVSKILQDNNFAILSIVKDYGGNDRVIIAKKAIKAENFEEIEEEEDVNLSE</sequence>
<name>PRMC_FUSNN</name>
<keyword id="KW-0489">Methyltransferase</keyword>
<keyword id="KW-1185">Reference proteome</keyword>
<keyword id="KW-0949">S-adenosyl-L-methionine</keyword>
<keyword id="KW-0808">Transferase</keyword>
<accession>Q8R619</accession>
<dbReference type="EC" id="2.1.1.297" evidence="1"/>
<dbReference type="EMBL" id="AE009951">
    <property type="protein sequence ID" value="AAL95527.1"/>
    <property type="molecule type" value="Genomic_DNA"/>
</dbReference>
<dbReference type="RefSeq" id="NP_604228.1">
    <property type="nucleotide sequence ID" value="NC_003454.1"/>
</dbReference>
<dbReference type="SMR" id="Q8R619"/>
<dbReference type="FunCoup" id="Q8R619">
    <property type="interactions" value="380"/>
</dbReference>
<dbReference type="STRING" id="190304.FN1331"/>
<dbReference type="PaxDb" id="190304-FN1331"/>
<dbReference type="EnsemblBacteria" id="AAL95527">
    <property type="protein sequence ID" value="AAL95527"/>
    <property type="gene ID" value="FN1331"/>
</dbReference>
<dbReference type="KEGG" id="fnu:FN1331"/>
<dbReference type="PATRIC" id="fig|190304.8.peg.1895"/>
<dbReference type="eggNOG" id="COG2890">
    <property type="taxonomic scope" value="Bacteria"/>
</dbReference>
<dbReference type="HOGENOM" id="CLU_018398_3_1_0"/>
<dbReference type="InParanoid" id="Q8R619"/>
<dbReference type="BioCyc" id="FNUC190304:G1FZS-1906-MONOMER"/>
<dbReference type="Proteomes" id="UP000002521">
    <property type="component" value="Chromosome"/>
</dbReference>
<dbReference type="GO" id="GO:0003676">
    <property type="term" value="F:nucleic acid binding"/>
    <property type="evidence" value="ECO:0007669"/>
    <property type="project" value="InterPro"/>
</dbReference>
<dbReference type="GO" id="GO:0102559">
    <property type="term" value="F:protein-(glutamine-N5) methyltransferase activity"/>
    <property type="evidence" value="ECO:0007669"/>
    <property type="project" value="UniProtKB-EC"/>
</dbReference>
<dbReference type="GO" id="GO:0036009">
    <property type="term" value="F:protein-glutamine N-methyltransferase activity"/>
    <property type="evidence" value="ECO:0000318"/>
    <property type="project" value="GO_Central"/>
</dbReference>
<dbReference type="GO" id="GO:0032259">
    <property type="term" value="P:methylation"/>
    <property type="evidence" value="ECO:0007669"/>
    <property type="project" value="UniProtKB-KW"/>
</dbReference>
<dbReference type="GO" id="GO:0006415">
    <property type="term" value="P:translational termination"/>
    <property type="evidence" value="ECO:0000318"/>
    <property type="project" value="GO_Central"/>
</dbReference>
<dbReference type="CDD" id="cd02440">
    <property type="entry name" value="AdoMet_MTases"/>
    <property type="match status" value="1"/>
</dbReference>
<dbReference type="Gene3D" id="1.10.8.10">
    <property type="entry name" value="DNA helicase RuvA subunit, C-terminal domain"/>
    <property type="match status" value="1"/>
</dbReference>
<dbReference type="Gene3D" id="3.40.50.150">
    <property type="entry name" value="Vaccinia Virus protein VP39"/>
    <property type="match status" value="1"/>
</dbReference>
<dbReference type="HAMAP" id="MF_02126">
    <property type="entry name" value="RF_methyltr_PrmC"/>
    <property type="match status" value="1"/>
</dbReference>
<dbReference type="InterPro" id="IPR002052">
    <property type="entry name" value="DNA_methylase_N6_adenine_CS"/>
</dbReference>
<dbReference type="InterPro" id="IPR004556">
    <property type="entry name" value="HemK-like"/>
</dbReference>
<dbReference type="InterPro" id="IPR050320">
    <property type="entry name" value="N5-glutamine_MTase"/>
</dbReference>
<dbReference type="InterPro" id="IPR040758">
    <property type="entry name" value="PrmC_N"/>
</dbReference>
<dbReference type="InterPro" id="IPR019874">
    <property type="entry name" value="RF_methyltr_PrmC"/>
</dbReference>
<dbReference type="InterPro" id="IPR029063">
    <property type="entry name" value="SAM-dependent_MTases_sf"/>
</dbReference>
<dbReference type="InterPro" id="IPR007848">
    <property type="entry name" value="Small_mtfrase_dom"/>
</dbReference>
<dbReference type="NCBIfam" id="TIGR00536">
    <property type="entry name" value="hemK_fam"/>
    <property type="match status" value="1"/>
</dbReference>
<dbReference type="NCBIfam" id="TIGR03534">
    <property type="entry name" value="RF_mod_PrmC"/>
    <property type="match status" value="1"/>
</dbReference>
<dbReference type="PANTHER" id="PTHR18895">
    <property type="entry name" value="HEMK METHYLTRANSFERASE"/>
    <property type="match status" value="1"/>
</dbReference>
<dbReference type="PANTHER" id="PTHR18895:SF74">
    <property type="entry name" value="MTRF1L RELEASE FACTOR GLUTAMINE METHYLTRANSFERASE"/>
    <property type="match status" value="1"/>
</dbReference>
<dbReference type="Pfam" id="PF05175">
    <property type="entry name" value="MTS"/>
    <property type="match status" value="1"/>
</dbReference>
<dbReference type="Pfam" id="PF17827">
    <property type="entry name" value="PrmC_N"/>
    <property type="match status" value="1"/>
</dbReference>
<dbReference type="SUPFAM" id="SSF53335">
    <property type="entry name" value="S-adenosyl-L-methionine-dependent methyltransferases"/>
    <property type="match status" value="1"/>
</dbReference>
<comment type="function">
    <text evidence="1">Methylates the class 1 translation termination release factors RF1/PrfA and RF2/PrfB on the glutamine residue of the universally conserved GGQ motif.</text>
</comment>
<comment type="catalytic activity">
    <reaction evidence="1">
        <text>L-glutaminyl-[peptide chain release factor] + S-adenosyl-L-methionine = N(5)-methyl-L-glutaminyl-[peptide chain release factor] + S-adenosyl-L-homocysteine + H(+)</text>
        <dbReference type="Rhea" id="RHEA:42896"/>
        <dbReference type="Rhea" id="RHEA-COMP:10271"/>
        <dbReference type="Rhea" id="RHEA-COMP:10272"/>
        <dbReference type="ChEBI" id="CHEBI:15378"/>
        <dbReference type="ChEBI" id="CHEBI:30011"/>
        <dbReference type="ChEBI" id="CHEBI:57856"/>
        <dbReference type="ChEBI" id="CHEBI:59789"/>
        <dbReference type="ChEBI" id="CHEBI:61891"/>
        <dbReference type="EC" id="2.1.1.297"/>
    </reaction>
</comment>
<comment type="similarity">
    <text evidence="1">Belongs to the protein N5-glutamine methyltransferase family. PrmC subfamily.</text>
</comment>
<proteinExistence type="inferred from homology"/>